<keyword id="KW-0319">Glycerol metabolism</keyword>
<keyword id="KW-0378">Hydrolase</keyword>
<keyword id="KW-0408">Iron</keyword>
<keyword id="KW-0479">Metal-binding</keyword>
<keyword id="KW-1185">Reference proteome</keyword>
<feature type="chain" id="PRO_0000413364" description="Probable glycerophosphodiester phosphodiesterase GpdQ">
    <location>
        <begin position="1"/>
        <end position="273"/>
    </location>
</feature>
<feature type="binding site" evidence="1">
    <location>
        <position position="8"/>
    </location>
    <ligand>
        <name>Fe cation</name>
        <dbReference type="ChEBI" id="CHEBI:24875"/>
        <label>1</label>
    </ligand>
</feature>
<feature type="binding site" evidence="1">
    <location>
        <position position="10"/>
    </location>
    <ligand>
        <name>Fe cation</name>
        <dbReference type="ChEBI" id="CHEBI:24875"/>
        <label>1</label>
    </ligand>
</feature>
<feature type="binding site" evidence="1">
    <location>
        <position position="50"/>
    </location>
    <ligand>
        <name>Fe cation</name>
        <dbReference type="ChEBI" id="CHEBI:24875"/>
        <label>1</label>
    </ligand>
</feature>
<feature type="binding site" evidence="1">
    <location>
        <position position="50"/>
    </location>
    <ligand>
        <name>Fe cation</name>
        <dbReference type="ChEBI" id="CHEBI:24875"/>
        <label>2</label>
    </ligand>
</feature>
<feature type="binding site" evidence="1">
    <location>
        <position position="80"/>
    </location>
    <ligand>
        <name>Fe cation</name>
        <dbReference type="ChEBI" id="CHEBI:24875"/>
        <label>2</label>
    </ligand>
</feature>
<feature type="binding site" evidence="1">
    <location>
        <position position="154"/>
    </location>
    <ligand>
        <name>Fe cation</name>
        <dbReference type="ChEBI" id="CHEBI:24875"/>
        <label>2</label>
    </ligand>
</feature>
<feature type="binding site" evidence="1">
    <location>
        <position position="194"/>
    </location>
    <ligand>
        <name>Fe cation</name>
        <dbReference type="ChEBI" id="CHEBI:24875"/>
        <label>2</label>
    </ligand>
</feature>
<feature type="binding site" evidence="1">
    <location>
        <position position="196"/>
    </location>
    <ligand>
        <name>Fe cation</name>
        <dbReference type="ChEBI" id="CHEBI:24875"/>
        <label>1</label>
    </ligand>
</feature>
<proteinExistence type="inferred from homology"/>
<accession>D5V0N9</accession>
<protein>
    <recommendedName>
        <fullName evidence="1">Probable glycerophosphodiester phosphodiesterase GpdQ</fullName>
        <shortName evidence="1">GDPD</shortName>
        <shortName evidence="1">Glycerophosphoryl diester phosphodiesterase</shortName>
        <ecNumber evidence="1">3.1.4.46</ecNumber>
    </recommendedName>
    <alternativeName>
        <fullName evidence="1">Glycerophosphodiesterase</fullName>
    </alternativeName>
    <alternativeName>
        <fullName evidence="1">Glycerophosphorylethanolamine phosphodiesterase</fullName>
        <shortName evidence="1">GPE phosphodiesterase</shortName>
    </alternativeName>
</protein>
<reference key="1">
    <citation type="journal article" date="2010" name="Stand. Genomic Sci.">
        <title>Complete genome sequence of Arcobacter nitrofigilis type strain (CI).</title>
        <authorList>
            <person name="Pati A."/>
            <person name="Gronow S."/>
            <person name="Lapidus A."/>
            <person name="Copeland A."/>
            <person name="Glavina Del Rio T."/>
            <person name="Nolan M."/>
            <person name="Lucas S."/>
            <person name="Tice H."/>
            <person name="Cheng J.F."/>
            <person name="Han C."/>
            <person name="Chertkov O."/>
            <person name="Bruce D."/>
            <person name="Tapia R."/>
            <person name="Goodwin L."/>
            <person name="Pitluck S."/>
            <person name="Liolios K."/>
            <person name="Ivanova N."/>
            <person name="Mavromatis K."/>
            <person name="Chen A."/>
            <person name="Palaniappan K."/>
            <person name="Land M."/>
            <person name="Hauser L."/>
            <person name="Chang Y.J."/>
            <person name="Jeffries C.D."/>
            <person name="Detter J.C."/>
            <person name="Rohde M."/>
            <person name="Goker M."/>
            <person name="Bristow J."/>
            <person name="Eisen J.A."/>
            <person name="Markowitz V."/>
            <person name="Hugenholtz P."/>
            <person name="Klenk H.P."/>
            <person name="Kyrpides N.C."/>
        </authorList>
    </citation>
    <scope>NUCLEOTIDE SEQUENCE [LARGE SCALE GENOMIC DNA]</scope>
    <source>
        <strain>ATCC 33309 / DSM 7299 / CCUG 15893 / LMG 7604 / NCTC 12251 / CI</strain>
    </source>
</reference>
<dbReference type="EC" id="3.1.4.46" evidence="1"/>
<dbReference type="EMBL" id="CP001999">
    <property type="protein sequence ID" value="ADG93851.1"/>
    <property type="molecule type" value="Genomic_DNA"/>
</dbReference>
<dbReference type="RefSeq" id="WP_013135996.1">
    <property type="nucleotide sequence ID" value="NC_014166.1"/>
</dbReference>
<dbReference type="SMR" id="D5V0N9"/>
<dbReference type="STRING" id="572480.Arnit_2199"/>
<dbReference type="KEGG" id="ant:Arnit_2199"/>
<dbReference type="eggNOG" id="COG1409">
    <property type="taxonomic scope" value="Bacteria"/>
</dbReference>
<dbReference type="HOGENOM" id="CLU_070320_2_1_7"/>
<dbReference type="OrthoDB" id="1662393at2"/>
<dbReference type="Proteomes" id="UP000000939">
    <property type="component" value="Chromosome"/>
</dbReference>
<dbReference type="GO" id="GO:0004115">
    <property type="term" value="F:3',5'-cyclic-AMP phosphodiesterase activity"/>
    <property type="evidence" value="ECO:0007669"/>
    <property type="project" value="UniProtKB-EC"/>
</dbReference>
<dbReference type="GO" id="GO:0008889">
    <property type="term" value="F:glycerophosphodiester phosphodiesterase activity"/>
    <property type="evidence" value="ECO:0007669"/>
    <property type="project" value="RHEA"/>
</dbReference>
<dbReference type="GO" id="GO:0046872">
    <property type="term" value="F:metal ion binding"/>
    <property type="evidence" value="ECO:0007669"/>
    <property type="project" value="UniProtKB-KW"/>
</dbReference>
<dbReference type="GO" id="GO:0006071">
    <property type="term" value="P:glycerol metabolic process"/>
    <property type="evidence" value="ECO:0007669"/>
    <property type="project" value="UniProtKB-KW"/>
</dbReference>
<dbReference type="CDD" id="cd07402">
    <property type="entry name" value="MPP_GpdQ"/>
    <property type="match status" value="1"/>
</dbReference>
<dbReference type="Gene3D" id="3.30.750.180">
    <property type="entry name" value="GpdQ, beta-strand dimerisation domain"/>
    <property type="match status" value="1"/>
</dbReference>
<dbReference type="Gene3D" id="3.60.21.40">
    <property type="entry name" value="GpdQ, catalytic alpha/beta sandwich domain"/>
    <property type="match status" value="1"/>
</dbReference>
<dbReference type="InterPro" id="IPR004843">
    <property type="entry name" value="Calcineurin-like_PHP_ApaH"/>
</dbReference>
<dbReference type="InterPro" id="IPR050884">
    <property type="entry name" value="CNP_phosphodiesterase-III"/>
</dbReference>
<dbReference type="InterPro" id="IPR026575">
    <property type="entry name" value="GpdQ/CpdA-like"/>
</dbReference>
<dbReference type="InterPro" id="IPR042281">
    <property type="entry name" value="GpdQ_beta-strand"/>
</dbReference>
<dbReference type="InterPro" id="IPR042283">
    <property type="entry name" value="GpdQ_catalytic"/>
</dbReference>
<dbReference type="InterPro" id="IPR029052">
    <property type="entry name" value="Metallo-depent_PP-like"/>
</dbReference>
<dbReference type="PANTHER" id="PTHR42988:SF2">
    <property type="entry name" value="CYCLIC NUCLEOTIDE PHOSPHODIESTERASE CBUA0032-RELATED"/>
    <property type="match status" value="1"/>
</dbReference>
<dbReference type="PANTHER" id="PTHR42988">
    <property type="entry name" value="PHOSPHOHYDROLASE"/>
    <property type="match status" value="1"/>
</dbReference>
<dbReference type="Pfam" id="PF00149">
    <property type="entry name" value="Metallophos"/>
    <property type="match status" value="1"/>
</dbReference>
<dbReference type="SUPFAM" id="SSF56300">
    <property type="entry name" value="Metallo-dependent phosphatases"/>
    <property type="match status" value="1"/>
</dbReference>
<evidence type="ECO:0000250" key="1">
    <source>
        <dbReference type="UniProtKB" id="Q6XBH1"/>
    </source>
</evidence>
<evidence type="ECO:0000305" key="2"/>
<organism>
    <name type="scientific">Arcobacter nitrofigilis (strain ATCC 33309 / DSM 7299 / CCUG 15893 / LMG 7604 / NCTC 12251 / CI)</name>
    <name type="common">Campylobacter nitrofigilis</name>
    <dbReference type="NCBI Taxonomy" id="572480"/>
    <lineage>
        <taxon>Bacteria</taxon>
        <taxon>Pseudomonadati</taxon>
        <taxon>Campylobacterota</taxon>
        <taxon>Epsilonproteobacteria</taxon>
        <taxon>Campylobacterales</taxon>
        <taxon>Arcobacteraceae</taxon>
        <taxon>Arcobacter</taxon>
    </lineage>
</organism>
<gene>
    <name evidence="1" type="primary">gpdQ</name>
    <name type="ordered locus">Arnit_2199</name>
</gene>
<sequence length="273" mass="31373">MIVVQVSDTHIKSKGKLAYNKVDIHKALYNCILHINNLKPKPDLVIFTGDITDNGTNEEYKLFKETVKLLDVPFYVIPGNHDNAENLKREFEEYDWFEENNHLSLVIEDFPIRIIGLDSSIKGKSYGGLSEERLLWLEKQLNKFPDKKVLLFIHHPPVKIGIEHMDVQNLQIGRERLADLLGKYEQVLALACGHVHRVSTTLWNKIIVLTAASPSHQVALDLRKDAKAEFVMEPPSVQLHYWTEEQGLTTHTSYIGKFEGPYPFYNEKGELID</sequence>
<name>GPDQ_ARCNC</name>
<comment type="function">
    <text evidence="1">Catalyzes the hydrolysis of the 3'-5' phosphodiester bond of glycerophosphodiesters such as glycerophosphorylethanolamine (GPE), a typical phospholipid metabolite.</text>
</comment>
<comment type="catalytic activity">
    <reaction evidence="1">
        <text>a sn-glycero-3-phosphodiester + H2O = an alcohol + sn-glycerol 3-phosphate + H(+)</text>
        <dbReference type="Rhea" id="RHEA:12969"/>
        <dbReference type="ChEBI" id="CHEBI:15377"/>
        <dbReference type="ChEBI" id="CHEBI:15378"/>
        <dbReference type="ChEBI" id="CHEBI:30879"/>
        <dbReference type="ChEBI" id="CHEBI:57597"/>
        <dbReference type="ChEBI" id="CHEBI:83408"/>
        <dbReference type="EC" id="3.1.4.46"/>
    </reaction>
</comment>
<comment type="catalytic activity">
    <reaction evidence="1">
        <text>sn-glycero-3-phosphoethanolamine + H2O = ethanolamine + sn-glycerol 3-phosphate + H(+)</text>
        <dbReference type="Rhea" id="RHEA:29319"/>
        <dbReference type="ChEBI" id="CHEBI:15377"/>
        <dbReference type="ChEBI" id="CHEBI:15378"/>
        <dbReference type="ChEBI" id="CHEBI:57597"/>
        <dbReference type="ChEBI" id="CHEBI:57603"/>
        <dbReference type="ChEBI" id="CHEBI:143890"/>
    </reaction>
</comment>
<comment type="cofactor">
    <cofactor evidence="1">
        <name>Fe(2+)</name>
        <dbReference type="ChEBI" id="CHEBI:29033"/>
    </cofactor>
    <text evidence="1">Binds 2 Fe(2+) ions per subunit.</text>
</comment>
<comment type="similarity">
    <text evidence="2">Belongs to the cyclic nucleotide phosphodiesterase class-III family.</text>
</comment>